<dbReference type="EC" id="3.1.21.10" evidence="1"/>
<dbReference type="EMBL" id="CP000285">
    <property type="protein sequence ID" value="ABE59198.1"/>
    <property type="molecule type" value="Genomic_DNA"/>
</dbReference>
<dbReference type="RefSeq" id="WP_011507144.1">
    <property type="nucleotide sequence ID" value="NC_007963.1"/>
</dbReference>
<dbReference type="SMR" id="Q1QWG0"/>
<dbReference type="STRING" id="290398.Csal_1846"/>
<dbReference type="GeneID" id="95334563"/>
<dbReference type="KEGG" id="csa:Csal_1846"/>
<dbReference type="eggNOG" id="COG0817">
    <property type="taxonomic scope" value="Bacteria"/>
</dbReference>
<dbReference type="HOGENOM" id="CLU_091257_2_1_6"/>
<dbReference type="OrthoDB" id="9805499at2"/>
<dbReference type="Proteomes" id="UP000000239">
    <property type="component" value="Chromosome"/>
</dbReference>
<dbReference type="GO" id="GO:0005737">
    <property type="term" value="C:cytoplasm"/>
    <property type="evidence" value="ECO:0007669"/>
    <property type="project" value="UniProtKB-SubCell"/>
</dbReference>
<dbReference type="GO" id="GO:0048476">
    <property type="term" value="C:Holliday junction resolvase complex"/>
    <property type="evidence" value="ECO:0007669"/>
    <property type="project" value="UniProtKB-UniRule"/>
</dbReference>
<dbReference type="GO" id="GO:0008821">
    <property type="term" value="F:crossover junction DNA endonuclease activity"/>
    <property type="evidence" value="ECO:0007669"/>
    <property type="project" value="UniProtKB-UniRule"/>
</dbReference>
<dbReference type="GO" id="GO:0003677">
    <property type="term" value="F:DNA binding"/>
    <property type="evidence" value="ECO:0007669"/>
    <property type="project" value="UniProtKB-KW"/>
</dbReference>
<dbReference type="GO" id="GO:0000287">
    <property type="term" value="F:magnesium ion binding"/>
    <property type="evidence" value="ECO:0007669"/>
    <property type="project" value="UniProtKB-UniRule"/>
</dbReference>
<dbReference type="GO" id="GO:0006310">
    <property type="term" value="P:DNA recombination"/>
    <property type="evidence" value="ECO:0007669"/>
    <property type="project" value="UniProtKB-UniRule"/>
</dbReference>
<dbReference type="GO" id="GO:0006281">
    <property type="term" value="P:DNA repair"/>
    <property type="evidence" value="ECO:0007669"/>
    <property type="project" value="UniProtKB-UniRule"/>
</dbReference>
<dbReference type="CDD" id="cd16962">
    <property type="entry name" value="RuvC"/>
    <property type="match status" value="1"/>
</dbReference>
<dbReference type="FunFam" id="3.30.420.10:FF:000002">
    <property type="entry name" value="Crossover junction endodeoxyribonuclease RuvC"/>
    <property type="match status" value="1"/>
</dbReference>
<dbReference type="Gene3D" id="3.30.420.10">
    <property type="entry name" value="Ribonuclease H-like superfamily/Ribonuclease H"/>
    <property type="match status" value="1"/>
</dbReference>
<dbReference type="HAMAP" id="MF_00034">
    <property type="entry name" value="RuvC"/>
    <property type="match status" value="1"/>
</dbReference>
<dbReference type="InterPro" id="IPR012337">
    <property type="entry name" value="RNaseH-like_sf"/>
</dbReference>
<dbReference type="InterPro" id="IPR036397">
    <property type="entry name" value="RNaseH_sf"/>
</dbReference>
<dbReference type="InterPro" id="IPR020563">
    <property type="entry name" value="X-over_junc_endoDNase_Mg_BS"/>
</dbReference>
<dbReference type="InterPro" id="IPR002176">
    <property type="entry name" value="X-over_junc_endoDNase_RuvC"/>
</dbReference>
<dbReference type="NCBIfam" id="TIGR00228">
    <property type="entry name" value="ruvC"/>
    <property type="match status" value="1"/>
</dbReference>
<dbReference type="PANTHER" id="PTHR30194">
    <property type="entry name" value="CROSSOVER JUNCTION ENDODEOXYRIBONUCLEASE RUVC"/>
    <property type="match status" value="1"/>
</dbReference>
<dbReference type="PANTHER" id="PTHR30194:SF3">
    <property type="entry name" value="CROSSOVER JUNCTION ENDODEOXYRIBONUCLEASE RUVC"/>
    <property type="match status" value="1"/>
</dbReference>
<dbReference type="Pfam" id="PF02075">
    <property type="entry name" value="RuvC"/>
    <property type="match status" value="1"/>
</dbReference>
<dbReference type="PRINTS" id="PR00696">
    <property type="entry name" value="RSOLVASERUVC"/>
</dbReference>
<dbReference type="SUPFAM" id="SSF53098">
    <property type="entry name" value="Ribonuclease H-like"/>
    <property type="match status" value="1"/>
</dbReference>
<dbReference type="PROSITE" id="PS01321">
    <property type="entry name" value="RUVC"/>
    <property type="match status" value="1"/>
</dbReference>
<organism>
    <name type="scientific">Chromohalobacter salexigens (strain ATCC BAA-138 / DSM 3043 / CIP 106854 / NCIMB 13768 / 1H11)</name>
    <dbReference type="NCBI Taxonomy" id="290398"/>
    <lineage>
        <taxon>Bacteria</taxon>
        <taxon>Pseudomonadati</taxon>
        <taxon>Pseudomonadota</taxon>
        <taxon>Gammaproteobacteria</taxon>
        <taxon>Oceanospirillales</taxon>
        <taxon>Halomonadaceae</taxon>
        <taxon>Chromohalobacter</taxon>
    </lineage>
</organism>
<evidence type="ECO:0000255" key="1">
    <source>
        <dbReference type="HAMAP-Rule" id="MF_00034"/>
    </source>
</evidence>
<evidence type="ECO:0000256" key="2">
    <source>
        <dbReference type="SAM" id="MobiDB-lite"/>
    </source>
</evidence>
<name>RUVC_CHRSD</name>
<keyword id="KW-0963">Cytoplasm</keyword>
<keyword id="KW-0227">DNA damage</keyword>
<keyword id="KW-0233">DNA recombination</keyword>
<keyword id="KW-0234">DNA repair</keyword>
<keyword id="KW-0238">DNA-binding</keyword>
<keyword id="KW-0255">Endonuclease</keyword>
<keyword id="KW-0378">Hydrolase</keyword>
<keyword id="KW-0460">Magnesium</keyword>
<keyword id="KW-0479">Metal-binding</keyword>
<keyword id="KW-0540">Nuclease</keyword>
<keyword id="KW-1185">Reference proteome</keyword>
<sequence>MTGEGSATILLGIDPGSRITGYGVVDVATPTPRYVASGCIRIKSDQLAQKLAQVYAGIGELIGLHRPHEIAIEQVFMSKNADSALKLGQARGTAIVCAANHGLEVFEYAPTQIKQAVTGTGAATKEQVQHMVTAILGLDGVPQADAADALAIALTHAYARQGRSLPPSRGRRRSGSRQRWRDYRPS</sequence>
<gene>
    <name evidence="1" type="primary">ruvC</name>
    <name type="ordered locus">Csal_1846</name>
</gene>
<protein>
    <recommendedName>
        <fullName evidence="1">Crossover junction endodeoxyribonuclease RuvC</fullName>
        <ecNumber evidence="1">3.1.21.10</ecNumber>
    </recommendedName>
    <alternativeName>
        <fullName evidence="1">Holliday junction nuclease RuvC</fullName>
    </alternativeName>
    <alternativeName>
        <fullName evidence="1">Holliday junction resolvase RuvC</fullName>
    </alternativeName>
</protein>
<feature type="chain" id="PRO_0000332414" description="Crossover junction endodeoxyribonuclease RuvC">
    <location>
        <begin position="1"/>
        <end position="186"/>
    </location>
</feature>
<feature type="region of interest" description="Disordered" evidence="2">
    <location>
        <begin position="162"/>
        <end position="186"/>
    </location>
</feature>
<feature type="compositionally biased region" description="Basic residues" evidence="2">
    <location>
        <begin position="169"/>
        <end position="178"/>
    </location>
</feature>
<feature type="active site" evidence="1">
    <location>
        <position position="14"/>
    </location>
</feature>
<feature type="active site" evidence="1">
    <location>
        <position position="73"/>
    </location>
</feature>
<feature type="active site" evidence="1">
    <location>
        <position position="145"/>
    </location>
</feature>
<feature type="binding site" evidence="1">
    <location>
        <position position="14"/>
    </location>
    <ligand>
        <name>Mg(2+)</name>
        <dbReference type="ChEBI" id="CHEBI:18420"/>
        <label>1</label>
    </ligand>
</feature>
<feature type="binding site" evidence="1">
    <location>
        <position position="73"/>
    </location>
    <ligand>
        <name>Mg(2+)</name>
        <dbReference type="ChEBI" id="CHEBI:18420"/>
        <label>2</label>
    </ligand>
</feature>
<feature type="binding site" evidence="1">
    <location>
        <position position="145"/>
    </location>
    <ligand>
        <name>Mg(2+)</name>
        <dbReference type="ChEBI" id="CHEBI:18420"/>
        <label>1</label>
    </ligand>
</feature>
<comment type="function">
    <text evidence="1">The RuvA-RuvB-RuvC complex processes Holliday junction (HJ) DNA during genetic recombination and DNA repair. Endonuclease that resolves HJ intermediates. Cleaves cruciform DNA by making single-stranded nicks across the HJ at symmetrical positions within the homologous arms, yielding a 5'-phosphate and a 3'-hydroxyl group; requires a central core of homology in the junction. The consensus cleavage sequence is 5'-(A/T)TT(C/G)-3'. Cleavage occurs on the 3'-side of the TT dinucleotide at the point of strand exchange. HJ branch migration catalyzed by RuvA-RuvB allows RuvC to scan DNA until it finds its consensus sequence, where it cleaves and resolves the cruciform DNA.</text>
</comment>
<comment type="catalytic activity">
    <reaction evidence="1">
        <text>Endonucleolytic cleavage at a junction such as a reciprocal single-stranded crossover between two homologous DNA duplexes (Holliday junction).</text>
        <dbReference type="EC" id="3.1.21.10"/>
    </reaction>
</comment>
<comment type="cofactor">
    <cofactor evidence="1">
        <name>Mg(2+)</name>
        <dbReference type="ChEBI" id="CHEBI:18420"/>
    </cofactor>
    <text evidence="1">Binds 2 Mg(2+) ion per subunit.</text>
</comment>
<comment type="subunit">
    <text evidence="1">Homodimer which binds Holliday junction (HJ) DNA. The HJ becomes 2-fold symmetrical on binding to RuvC with unstacked arms; it has a different conformation from HJ DNA in complex with RuvA. In the full resolvosome a probable DNA-RuvA(4)-RuvB(12)-RuvC(2) complex forms which resolves the HJ.</text>
</comment>
<comment type="subcellular location">
    <subcellularLocation>
        <location evidence="1">Cytoplasm</location>
    </subcellularLocation>
</comment>
<comment type="similarity">
    <text evidence="1">Belongs to the RuvC family.</text>
</comment>
<accession>Q1QWG0</accession>
<proteinExistence type="inferred from homology"/>
<reference key="1">
    <citation type="journal article" date="2011" name="Stand. Genomic Sci.">
        <title>Complete genome sequence of the halophilic and highly halotolerant Chromohalobacter salexigens type strain (1H11(T)).</title>
        <authorList>
            <person name="Copeland A."/>
            <person name="O'Connor K."/>
            <person name="Lucas S."/>
            <person name="Lapidus A."/>
            <person name="Berry K.W."/>
            <person name="Detter J.C."/>
            <person name="Del Rio T.G."/>
            <person name="Hammon N."/>
            <person name="Dalin E."/>
            <person name="Tice H."/>
            <person name="Pitluck S."/>
            <person name="Bruce D."/>
            <person name="Goodwin L."/>
            <person name="Han C."/>
            <person name="Tapia R."/>
            <person name="Saunders E."/>
            <person name="Schmutz J."/>
            <person name="Brettin T."/>
            <person name="Larimer F."/>
            <person name="Land M."/>
            <person name="Hauser L."/>
            <person name="Vargas C."/>
            <person name="Nieto J.J."/>
            <person name="Kyrpides N.C."/>
            <person name="Ivanova N."/>
            <person name="Goker M."/>
            <person name="Klenk H.P."/>
            <person name="Csonka L.N."/>
            <person name="Woyke T."/>
        </authorList>
    </citation>
    <scope>NUCLEOTIDE SEQUENCE [LARGE SCALE GENOMIC DNA]</scope>
    <source>
        <strain>ATCC BAA-138 / DSM 3043 / CIP 106854 / NCIMB 13768 / 1H11</strain>
    </source>
</reference>